<keyword id="KW-0030">Aminoacyl-tRNA synthetase</keyword>
<keyword id="KW-0067">ATP-binding</keyword>
<keyword id="KW-0963">Cytoplasm</keyword>
<keyword id="KW-0436">Ligase</keyword>
<keyword id="KW-0479">Metal-binding</keyword>
<keyword id="KW-0547">Nucleotide-binding</keyword>
<keyword id="KW-0648">Protein biosynthesis</keyword>
<keyword id="KW-0862">Zinc</keyword>
<comment type="function">
    <text evidence="1">Catalyzes the attachment of glutamate to tRNA(Glu) in a two-step reaction: glutamate is first activated by ATP to form Glu-AMP and then transferred to the acceptor end of tRNA(Glu).</text>
</comment>
<comment type="catalytic activity">
    <reaction evidence="1">
        <text>tRNA(Glu) + L-glutamate + ATP = L-glutamyl-tRNA(Glu) + AMP + diphosphate</text>
        <dbReference type="Rhea" id="RHEA:23540"/>
        <dbReference type="Rhea" id="RHEA-COMP:9663"/>
        <dbReference type="Rhea" id="RHEA-COMP:9680"/>
        <dbReference type="ChEBI" id="CHEBI:29985"/>
        <dbReference type="ChEBI" id="CHEBI:30616"/>
        <dbReference type="ChEBI" id="CHEBI:33019"/>
        <dbReference type="ChEBI" id="CHEBI:78442"/>
        <dbReference type="ChEBI" id="CHEBI:78520"/>
        <dbReference type="ChEBI" id="CHEBI:456215"/>
        <dbReference type="EC" id="6.1.1.17"/>
    </reaction>
</comment>
<comment type="cofactor">
    <cofactor evidence="1">
        <name>Zn(2+)</name>
        <dbReference type="ChEBI" id="CHEBI:29105"/>
    </cofactor>
    <text evidence="1">Binds 1 zinc ion per subunit.</text>
</comment>
<comment type="subunit">
    <text evidence="1">Monomer.</text>
</comment>
<comment type="subcellular location">
    <subcellularLocation>
        <location evidence="1">Cytoplasm</location>
    </subcellularLocation>
</comment>
<comment type="similarity">
    <text evidence="1">Belongs to the class-I aminoacyl-tRNA synthetase family. Glutamate--tRNA ligase type 1 subfamily.</text>
</comment>
<name>SYE_SYNP6</name>
<organism>
    <name type="scientific">Synechococcus sp. (strain ATCC 27144 / PCC 6301 / SAUG 1402/1)</name>
    <name type="common">Anacystis nidulans</name>
    <dbReference type="NCBI Taxonomy" id="269084"/>
    <lineage>
        <taxon>Bacteria</taxon>
        <taxon>Bacillati</taxon>
        <taxon>Cyanobacteriota</taxon>
        <taxon>Cyanophyceae</taxon>
        <taxon>Synechococcales</taxon>
        <taxon>Synechococcaceae</taxon>
        <taxon>Synechococcus</taxon>
    </lineage>
</organism>
<protein>
    <recommendedName>
        <fullName evidence="1">Glutamate--tRNA ligase</fullName>
        <ecNumber evidence="1">6.1.1.17</ecNumber>
    </recommendedName>
    <alternativeName>
        <fullName evidence="1">Glutamyl-tRNA synthetase</fullName>
        <shortName evidence="1">GluRS</shortName>
    </alternativeName>
</protein>
<gene>
    <name evidence="1" type="primary">gltX</name>
    <name type="ordered locus">syc1712_c</name>
</gene>
<evidence type="ECO:0000255" key="1">
    <source>
        <dbReference type="HAMAP-Rule" id="MF_00022"/>
    </source>
</evidence>
<feature type="chain" id="PRO_0000119676" description="Glutamate--tRNA ligase">
    <location>
        <begin position="1"/>
        <end position="481"/>
    </location>
</feature>
<feature type="short sequence motif" description="'HIGH' region" evidence="1">
    <location>
        <begin position="9"/>
        <end position="19"/>
    </location>
</feature>
<feature type="short sequence motif" description="'KMSKS' region" evidence="1">
    <location>
        <begin position="248"/>
        <end position="252"/>
    </location>
</feature>
<feature type="binding site" evidence="1">
    <location>
        <position position="98"/>
    </location>
    <ligand>
        <name>Zn(2+)</name>
        <dbReference type="ChEBI" id="CHEBI:29105"/>
    </ligand>
</feature>
<feature type="binding site" evidence="1">
    <location>
        <position position="100"/>
    </location>
    <ligand>
        <name>Zn(2+)</name>
        <dbReference type="ChEBI" id="CHEBI:29105"/>
    </ligand>
</feature>
<feature type="binding site" evidence="1">
    <location>
        <position position="125"/>
    </location>
    <ligand>
        <name>Zn(2+)</name>
        <dbReference type="ChEBI" id="CHEBI:29105"/>
    </ligand>
</feature>
<feature type="binding site" evidence="1">
    <location>
        <position position="127"/>
    </location>
    <ligand>
        <name>Zn(2+)</name>
        <dbReference type="ChEBI" id="CHEBI:29105"/>
    </ligand>
</feature>
<feature type="binding site" evidence="1">
    <location>
        <position position="251"/>
    </location>
    <ligand>
        <name>ATP</name>
        <dbReference type="ChEBI" id="CHEBI:30616"/>
    </ligand>
</feature>
<sequence>MSVRVRIAPSPTGNLHIGTARTAVFNWLFARRHQGQFILRIEDTDLERSRSEYTDNILTGLQWLGLNWDEGPFYQTQRLDLYKAAVQQLLDSGKAYRCYCTEAELEALRESQRARNEAPRYDNRHRDLTPEQEAAFQAEGREAVIRFRIDDDREIAWTDLVRDRVVWKGSDLGGDMVIARRSPAGTIGQPLYNLAVVVDDIDMTISHVIRGEDHIANTAKQILLYEALGAAVPEFAHTPLILNKEGRKLSKRDGVTSISDFQNLGYLPEAIANYMTLLGWSPVEGMDERFSLAEAATVFDFDRVNKAGAKFDWDKLNWLNSQVIKEKSASELVALLQPFWSKAGVDTAAYPAAWLEELATLLGPSLVTLTDIVGQSQLFFSQGIELQEDAIAQLGQAGSKAVLQQILEALPSEALTLEVAKGLIDQAVKAAGVKKGIGMRSLRAALMGSMQGPDLLTSWVLLHQAGQAQPRLQAAIAAAQG</sequence>
<reference key="1">
    <citation type="journal article" date="2007" name="Photosyn. Res.">
        <title>Complete nucleotide sequence of the freshwater unicellular cyanobacterium Synechococcus elongatus PCC 6301 chromosome: gene content and organization.</title>
        <authorList>
            <person name="Sugita C."/>
            <person name="Ogata K."/>
            <person name="Shikata M."/>
            <person name="Jikuya H."/>
            <person name="Takano J."/>
            <person name="Furumichi M."/>
            <person name="Kanehisa M."/>
            <person name="Omata T."/>
            <person name="Sugiura M."/>
            <person name="Sugita M."/>
        </authorList>
    </citation>
    <scope>NUCLEOTIDE SEQUENCE [LARGE SCALE GENOMIC DNA]</scope>
    <source>
        <strain>ATCC 27144 / PCC 6301 / SAUG 1402/1</strain>
    </source>
</reference>
<proteinExistence type="inferred from homology"/>
<accession>Q5N1B8</accession>
<dbReference type="EC" id="6.1.1.17" evidence="1"/>
<dbReference type="EMBL" id="AP008231">
    <property type="protein sequence ID" value="BAD79902.1"/>
    <property type="molecule type" value="Genomic_DNA"/>
</dbReference>
<dbReference type="RefSeq" id="WP_011244022.1">
    <property type="nucleotide sequence ID" value="NZ_CP085785.1"/>
</dbReference>
<dbReference type="SMR" id="Q5N1B8"/>
<dbReference type="GeneID" id="72431282"/>
<dbReference type="KEGG" id="syc:syc1712_c"/>
<dbReference type="eggNOG" id="COG0008">
    <property type="taxonomic scope" value="Bacteria"/>
</dbReference>
<dbReference type="Proteomes" id="UP000001175">
    <property type="component" value="Chromosome"/>
</dbReference>
<dbReference type="GO" id="GO:0005829">
    <property type="term" value="C:cytosol"/>
    <property type="evidence" value="ECO:0007669"/>
    <property type="project" value="TreeGrafter"/>
</dbReference>
<dbReference type="GO" id="GO:0005524">
    <property type="term" value="F:ATP binding"/>
    <property type="evidence" value="ECO:0007669"/>
    <property type="project" value="UniProtKB-UniRule"/>
</dbReference>
<dbReference type="GO" id="GO:0004818">
    <property type="term" value="F:glutamate-tRNA ligase activity"/>
    <property type="evidence" value="ECO:0007669"/>
    <property type="project" value="UniProtKB-UniRule"/>
</dbReference>
<dbReference type="GO" id="GO:0000049">
    <property type="term" value="F:tRNA binding"/>
    <property type="evidence" value="ECO:0007669"/>
    <property type="project" value="InterPro"/>
</dbReference>
<dbReference type="GO" id="GO:0008270">
    <property type="term" value="F:zinc ion binding"/>
    <property type="evidence" value="ECO:0007669"/>
    <property type="project" value="UniProtKB-UniRule"/>
</dbReference>
<dbReference type="GO" id="GO:0006424">
    <property type="term" value="P:glutamyl-tRNA aminoacylation"/>
    <property type="evidence" value="ECO:0007669"/>
    <property type="project" value="UniProtKB-UniRule"/>
</dbReference>
<dbReference type="CDD" id="cd00808">
    <property type="entry name" value="GluRS_core"/>
    <property type="match status" value="1"/>
</dbReference>
<dbReference type="FunFam" id="3.40.50.620:FF:000007">
    <property type="entry name" value="Glutamate--tRNA ligase"/>
    <property type="match status" value="1"/>
</dbReference>
<dbReference type="Gene3D" id="1.10.10.350">
    <property type="match status" value="1"/>
</dbReference>
<dbReference type="Gene3D" id="1.10.8.70">
    <property type="entry name" value="Glutamate-tRNA synthetase, class I, anticodon-binding domain 1"/>
    <property type="match status" value="1"/>
</dbReference>
<dbReference type="Gene3D" id="1.10.1160.10">
    <property type="entry name" value="Glutamyl-trna Synthetase, Domain 2"/>
    <property type="match status" value="1"/>
</dbReference>
<dbReference type="Gene3D" id="3.90.800.10">
    <property type="entry name" value="Glutamyl-tRNA Synthetase, Domain 3"/>
    <property type="match status" value="1"/>
</dbReference>
<dbReference type="Gene3D" id="3.40.50.620">
    <property type="entry name" value="HUPs"/>
    <property type="match status" value="1"/>
</dbReference>
<dbReference type="HAMAP" id="MF_00022">
    <property type="entry name" value="Glu_tRNA_synth_type1"/>
    <property type="match status" value="1"/>
</dbReference>
<dbReference type="InterPro" id="IPR045462">
    <property type="entry name" value="aa-tRNA-synth_I_cd-bd"/>
</dbReference>
<dbReference type="InterPro" id="IPR020751">
    <property type="entry name" value="aa-tRNA-synth_I_codon-bd_sub2"/>
</dbReference>
<dbReference type="InterPro" id="IPR001412">
    <property type="entry name" value="aa-tRNA-synth_I_CS"/>
</dbReference>
<dbReference type="InterPro" id="IPR008925">
    <property type="entry name" value="aa_tRNA-synth_I_cd-bd_sf"/>
</dbReference>
<dbReference type="InterPro" id="IPR004527">
    <property type="entry name" value="Glu-tRNA-ligase_bac/mito"/>
</dbReference>
<dbReference type="InterPro" id="IPR020752">
    <property type="entry name" value="Glu-tRNA-synth_I_codon-bd_sub1"/>
</dbReference>
<dbReference type="InterPro" id="IPR000924">
    <property type="entry name" value="Glu/Gln-tRNA-synth"/>
</dbReference>
<dbReference type="InterPro" id="IPR020058">
    <property type="entry name" value="Glu/Gln-tRNA-synth_Ib_cat-dom"/>
</dbReference>
<dbReference type="InterPro" id="IPR020061">
    <property type="entry name" value="Glu_tRNA_lig_a-bdl"/>
</dbReference>
<dbReference type="InterPro" id="IPR049940">
    <property type="entry name" value="GluQ/Sye"/>
</dbReference>
<dbReference type="InterPro" id="IPR033910">
    <property type="entry name" value="GluRS_core"/>
</dbReference>
<dbReference type="InterPro" id="IPR014729">
    <property type="entry name" value="Rossmann-like_a/b/a_fold"/>
</dbReference>
<dbReference type="NCBIfam" id="TIGR00464">
    <property type="entry name" value="gltX_bact"/>
    <property type="match status" value="1"/>
</dbReference>
<dbReference type="PANTHER" id="PTHR43311">
    <property type="entry name" value="GLUTAMATE--TRNA LIGASE"/>
    <property type="match status" value="1"/>
</dbReference>
<dbReference type="PANTHER" id="PTHR43311:SF2">
    <property type="entry name" value="GLUTAMATE--TRNA LIGASE, MITOCHONDRIAL-RELATED"/>
    <property type="match status" value="1"/>
</dbReference>
<dbReference type="Pfam" id="PF19269">
    <property type="entry name" value="Anticodon_2"/>
    <property type="match status" value="1"/>
</dbReference>
<dbReference type="Pfam" id="PF00749">
    <property type="entry name" value="tRNA-synt_1c"/>
    <property type="match status" value="1"/>
</dbReference>
<dbReference type="PRINTS" id="PR00987">
    <property type="entry name" value="TRNASYNTHGLU"/>
</dbReference>
<dbReference type="SUPFAM" id="SSF48163">
    <property type="entry name" value="An anticodon-binding domain of class I aminoacyl-tRNA synthetases"/>
    <property type="match status" value="1"/>
</dbReference>
<dbReference type="SUPFAM" id="SSF52374">
    <property type="entry name" value="Nucleotidylyl transferase"/>
    <property type="match status" value="1"/>
</dbReference>
<dbReference type="PROSITE" id="PS00178">
    <property type="entry name" value="AA_TRNA_LIGASE_I"/>
    <property type="match status" value="1"/>
</dbReference>